<gene>
    <name evidence="1" type="primary">rpsU</name>
    <name type="ordered locus">CCA_00322</name>
</gene>
<feature type="chain" id="PRO_0000178322" description="Small ribosomal subunit protein bS21">
    <location>
        <begin position="1"/>
        <end position="58"/>
    </location>
</feature>
<feature type="region of interest" description="Disordered" evidence="2">
    <location>
        <begin position="39"/>
        <end position="58"/>
    </location>
</feature>
<feature type="compositionally biased region" description="Basic residues" evidence="2">
    <location>
        <begin position="43"/>
        <end position="58"/>
    </location>
</feature>
<dbReference type="EMBL" id="AE015925">
    <property type="protein sequence ID" value="AAP05071.1"/>
    <property type="molecule type" value="Genomic_DNA"/>
</dbReference>
<dbReference type="RefSeq" id="WP_006343002.1">
    <property type="nucleotide sequence ID" value="NC_003361.3"/>
</dbReference>
<dbReference type="SMR" id="Q823T3"/>
<dbReference type="STRING" id="227941.CCA_00322"/>
<dbReference type="GeneID" id="93024872"/>
<dbReference type="KEGG" id="cca:CCA_00322"/>
<dbReference type="eggNOG" id="COG0828">
    <property type="taxonomic scope" value="Bacteria"/>
</dbReference>
<dbReference type="HOGENOM" id="CLU_159258_2_3_0"/>
<dbReference type="OrthoDB" id="9799244at2"/>
<dbReference type="Proteomes" id="UP000002193">
    <property type="component" value="Chromosome"/>
</dbReference>
<dbReference type="GO" id="GO:1990904">
    <property type="term" value="C:ribonucleoprotein complex"/>
    <property type="evidence" value="ECO:0007669"/>
    <property type="project" value="UniProtKB-KW"/>
</dbReference>
<dbReference type="GO" id="GO:0005840">
    <property type="term" value="C:ribosome"/>
    <property type="evidence" value="ECO:0007669"/>
    <property type="project" value="UniProtKB-KW"/>
</dbReference>
<dbReference type="GO" id="GO:0003735">
    <property type="term" value="F:structural constituent of ribosome"/>
    <property type="evidence" value="ECO:0007669"/>
    <property type="project" value="InterPro"/>
</dbReference>
<dbReference type="GO" id="GO:0006412">
    <property type="term" value="P:translation"/>
    <property type="evidence" value="ECO:0007669"/>
    <property type="project" value="UniProtKB-UniRule"/>
</dbReference>
<dbReference type="Gene3D" id="1.20.5.1150">
    <property type="entry name" value="Ribosomal protein S8"/>
    <property type="match status" value="1"/>
</dbReference>
<dbReference type="HAMAP" id="MF_00358">
    <property type="entry name" value="Ribosomal_bS21"/>
    <property type="match status" value="1"/>
</dbReference>
<dbReference type="InterPro" id="IPR001911">
    <property type="entry name" value="Ribosomal_bS21"/>
</dbReference>
<dbReference type="InterPro" id="IPR038380">
    <property type="entry name" value="Ribosomal_bS21_sf"/>
</dbReference>
<dbReference type="NCBIfam" id="TIGR00030">
    <property type="entry name" value="S21p"/>
    <property type="match status" value="1"/>
</dbReference>
<dbReference type="Pfam" id="PF01165">
    <property type="entry name" value="Ribosomal_S21"/>
    <property type="match status" value="1"/>
</dbReference>
<dbReference type="PRINTS" id="PR00976">
    <property type="entry name" value="RIBOSOMALS21"/>
</dbReference>
<organism>
    <name type="scientific">Chlamydia caviae (strain ATCC VR-813 / DSM 19441 / 03DC25 / GPIC)</name>
    <name type="common">Chlamydophila caviae</name>
    <dbReference type="NCBI Taxonomy" id="227941"/>
    <lineage>
        <taxon>Bacteria</taxon>
        <taxon>Pseudomonadati</taxon>
        <taxon>Chlamydiota</taxon>
        <taxon>Chlamydiia</taxon>
        <taxon>Chlamydiales</taxon>
        <taxon>Chlamydiaceae</taxon>
        <taxon>Chlamydia/Chlamydophila group</taxon>
        <taxon>Chlamydia</taxon>
    </lineage>
</organism>
<name>RS21_CHLCV</name>
<proteinExistence type="inferred from homology"/>
<comment type="similarity">
    <text evidence="1">Belongs to the bacterial ribosomal protein bS21 family.</text>
</comment>
<reference key="1">
    <citation type="journal article" date="2003" name="Nucleic Acids Res.">
        <title>Genome sequence of Chlamydophila caviae (Chlamydia psittaci GPIC): examining the role of niche-specific genes in the evolution of the Chlamydiaceae.</title>
        <authorList>
            <person name="Read T.D."/>
            <person name="Myers G.S.A."/>
            <person name="Brunham R.C."/>
            <person name="Nelson W.C."/>
            <person name="Paulsen I.T."/>
            <person name="Heidelberg J.F."/>
            <person name="Holtzapple E.K."/>
            <person name="Khouri H.M."/>
            <person name="Federova N.B."/>
            <person name="Carty H.A."/>
            <person name="Umayam L.A."/>
            <person name="Haft D.H."/>
            <person name="Peterson J.D."/>
            <person name="Beanan M.J."/>
            <person name="White O."/>
            <person name="Salzberg S.L."/>
            <person name="Hsia R.-C."/>
            <person name="McClarty G."/>
            <person name="Rank R.G."/>
            <person name="Bavoil P.M."/>
            <person name="Fraser C.M."/>
        </authorList>
    </citation>
    <scope>NUCLEOTIDE SEQUENCE [LARGE SCALE GENOMIC DNA]</scope>
    <source>
        <strain>ATCC VR-813 / DSM 19441 / 03DC25 / GPIC</strain>
    </source>
</reference>
<sequence>MPSVKVRVGEPVDRALRILKKKVDKEGILKAAKAHRFYDKPSVKKRAKSKAAAKYRSR</sequence>
<evidence type="ECO:0000255" key="1">
    <source>
        <dbReference type="HAMAP-Rule" id="MF_00358"/>
    </source>
</evidence>
<evidence type="ECO:0000256" key="2">
    <source>
        <dbReference type="SAM" id="MobiDB-lite"/>
    </source>
</evidence>
<evidence type="ECO:0000305" key="3"/>
<keyword id="KW-0687">Ribonucleoprotein</keyword>
<keyword id="KW-0689">Ribosomal protein</keyword>
<protein>
    <recommendedName>
        <fullName evidence="1">Small ribosomal subunit protein bS21</fullName>
    </recommendedName>
    <alternativeName>
        <fullName evidence="3">30S ribosomal protein S21</fullName>
    </alternativeName>
</protein>
<accession>Q823T3</accession>